<gene>
    <name type="primary">VETFS</name>
    <name type="ordered locus">MC095R</name>
</gene>
<name>ETF1_MCV1</name>
<organismHost>
    <name type="scientific">Homo sapiens</name>
    <name type="common">Human</name>
    <dbReference type="NCBI Taxonomy" id="9606"/>
</organismHost>
<proteinExistence type="inferred from homology"/>
<feature type="chain" id="PRO_0000099074" description="Early transcription factor 70 kDa subunit">
    <location>
        <begin position="1"/>
        <end position="635"/>
    </location>
</feature>
<feature type="domain" description="Helicase ATP-binding" evidence="2">
    <location>
        <begin position="32"/>
        <end position="185"/>
    </location>
</feature>
<feature type="short sequence motif" description="DEXH box">
    <location>
        <begin position="135"/>
        <end position="138"/>
    </location>
</feature>
<feature type="binding site" evidence="2">
    <location>
        <begin position="45"/>
        <end position="52"/>
    </location>
    <ligand>
        <name>ATP</name>
        <dbReference type="ChEBI" id="CHEBI:30616"/>
    </ligand>
</feature>
<accession>Q98262</accession>
<dbReference type="EC" id="3.6.4.-"/>
<dbReference type="EMBL" id="U60315">
    <property type="protein sequence ID" value="AAC55223.1"/>
    <property type="molecule type" value="Genomic_DNA"/>
</dbReference>
<dbReference type="PIR" id="T30697">
    <property type="entry name" value="T30697"/>
</dbReference>
<dbReference type="RefSeq" id="NP_044046.1">
    <property type="nucleotide sequence ID" value="NC_001731.1"/>
</dbReference>
<dbReference type="SMR" id="Q98262"/>
<dbReference type="GeneID" id="1487114"/>
<dbReference type="KEGG" id="vg:1487114"/>
<dbReference type="OrthoDB" id="1135at10239"/>
<dbReference type="Proteomes" id="UP000000869">
    <property type="component" value="Genome"/>
</dbReference>
<dbReference type="GO" id="GO:0044423">
    <property type="term" value="C:virion component"/>
    <property type="evidence" value="ECO:0007669"/>
    <property type="project" value="UniProtKB-KW"/>
</dbReference>
<dbReference type="GO" id="GO:0005524">
    <property type="term" value="F:ATP binding"/>
    <property type="evidence" value="ECO:0007669"/>
    <property type="project" value="UniProtKB-KW"/>
</dbReference>
<dbReference type="GO" id="GO:0003677">
    <property type="term" value="F:DNA binding"/>
    <property type="evidence" value="ECO:0007669"/>
    <property type="project" value="UniProtKB-KW"/>
</dbReference>
<dbReference type="GO" id="GO:0004386">
    <property type="term" value="F:helicase activity"/>
    <property type="evidence" value="ECO:0007669"/>
    <property type="project" value="UniProtKB-KW"/>
</dbReference>
<dbReference type="GO" id="GO:0016787">
    <property type="term" value="F:hydrolase activity"/>
    <property type="evidence" value="ECO:0007669"/>
    <property type="project" value="UniProtKB-KW"/>
</dbReference>
<dbReference type="Gene3D" id="3.40.50.300">
    <property type="entry name" value="P-loop containing nucleotide triphosphate hydrolases"/>
    <property type="match status" value="2"/>
</dbReference>
<dbReference type="InterPro" id="IPR002464">
    <property type="entry name" value="DNA/RNA_helicase_DEAH_CS"/>
</dbReference>
<dbReference type="InterPro" id="IPR006935">
    <property type="entry name" value="Helicase/UvrB_N"/>
</dbReference>
<dbReference type="InterPro" id="IPR014001">
    <property type="entry name" value="Helicase_ATP-bd"/>
</dbReference>
<dbReference type="InterPro" id="IPR001650">
    <property type="entry name" value="Helicase_C-like"/>
</dbReference>
<dbReference type="InterPro" id="IPR027417">
    <property type="entry name" value="P-loop_NTPase"/>
</dbReference>
<dbReference type="Pfam" id="PF00271">
    <property type="entry name" value="Helicase_C"/>
    <property type="match status" value="1"/>
</dbReference>
<dbReference type="Pfam" id="PF04851">
    <property type="entry name" value="ResIII"/>
    <property type="match status" value="1"/>
</dbReference>
<dbReference type="SMART" id="SM00487">
    <property type="entry name" value="DEXDc"/>
    <property type="match status" value="1"/>
</dbReference>
<dbReference type="SMART" id="SM00490">
    <property type="entry name" value="HELICc"/>
    <property type="match status" value="1"/>
</dbReference>
<dbReference type="SUPFAM" id="SSF52540">
    <property type="entry name" value="P-loop containing nucleoside triphosphate hydrolases"/>
    <property type="match status" value="2"/>
</dbReference>
<dbReference type="PROSITE" id="PS00690">
    <property type="entry name" value="DEAH_ATP_HELICASE"/>
    <property type="match status" value="1"/>
</dbReference>
<dbReference type="PROSITE" id="PS51192">
    <property type="entry name" value="HELICASE_ATP_BIND_1"/>
    <property type="match status" value="1"/>
</dbReference>
<keyword id="KW-0010">Activator</keyword>
<keyword id="KW-0067">ATP-binding</keyword>
<keyword id="KW-0238">DNA-binding</keyword>
<keyword id="KW-0347">Helicase</keyword>
<keyword id="KW-0378">Hydrolase</keyword>
<keyword id="KW-0547">Nucleotide-binding</keyword>
<keyword id="KW-1185">Reference proteome</keyword>
<keyword id="KW-0804">Transcription</keyword>
<keyword id="KW-0805">Transcription regulation</keyword>
<keyword id="KW-0946">Virion</keyword>
<organism>
    <name type="scientific">Molluscum contagiosum virus subtype 1</name>
    <name type="common">MOCV</name>
    <name type="synonym">MCVI</name>
    <dbReference type="NCBI Taxonomy" id="10280"/>
    <lineage>
        <taxon>Viruses</taxon>
        <taxon>Varidnaviria</taxon>
        <taxon>Bamfordvirae</taxon>
        <taxon>Nucleocytoviricota</taxon>
        <taxon>Pokkesviricetes</taxon>
        <taxon>Chitovirales</taxon>
        <taxon>Poxviridae</taxon>
        <taxon>Chordopoxvirinae</taxon>
        <taxon>Molluscipoxvirus</taxon>
        <taxon>Molluscum contagiosum virus</taxon>
    </lineage>
</organism>
<sequence length="635" mass="72878">MNLGIVSLFREHVDSIPNILPHQLATLDFLLRSILDENNSVLLFHIMGSGKTIIALLFALIVSKFKKVYILVPNINILKIFTYNMGIAVNLINSDYVLENIHIYSTTSFYSLNYNDNVINYNGLAKYNNAIFIIDEAHNIFGNNTGELMTVIKNKNKVPFLLLSGSPITNTPITLSNIISIMSDEGINFSDIIIQGKKVFQILLNENGVSVLKRILRDKISYYELQDTELPSIVFHGRRFLDTRIVYCHMSKLQERDYINVRKLCNNEMFEKNMNNVSLAVLGPLNLINNLDILFQDQDKELYPNLKISNGVLYGDELVSLNISSKFKYFIARIQSLTGKHFIYFSNSTYGGLIIKYIMLSNGYSEHNGSQGTNPKTIGGRLKTFAIVTSKMKSSLEELLAVYNSPANNDGSRIMFLFSSNIMSESYTLKEVMHIWFMTIPDTFSQYNQILGRSIRKFSYTNIAEPVNVYLLAAIYADFDDDITSLDNYSIDEINVLPFDIKKLLYLKFKTKETKRIYSILKDISVNYTLPPHPQIVDVVLGELTRQFFYHHSRVRADDPELFAAIDRVLCSPDSTRRYLDEITRGHFFVCNRVFEKALLYRHGEDIIVVPFKLSHDQFLWAINFRKEYNVGAPL</sequence>
<reference key="1">
    <citation type="journal article" date="1996" name="Science">
        <title>Genome sequence of a human tumorigenic poxvirus: prediction of specific host response-evasion genes.</title>
        <authorList>
            <person name="Senkevich T.G."/>
            <person name="Bugert J.J."/>
            <person name="Sisler J.R."/>
            <person name="Koonin E.V."/>
            <person name="Darai G."/>
            <person name="Moss B."/>
        </authorList>
    </citation>
    <scope>NUCLEOTIDE SEQUENCE [LARGE SCALE GENOMIC DNA]</scope>
</reference>
<protein>
    <recommendedName>
        <fullName>Early transcription factor 70 kDa subunit</fullName>
        <ecNumber>3.6.4.-</ecNumber>
    </recommendedName>
    <alternativeName>
        <fullName>ATP-dependent helicase VETFS</fullName>
    </alternativeName>
    <alternativeName>
        <fullName>ETF small subunit</fullName>
    </alternativeName>
</protein>
<comment type="function">
    <text evidence="1">Acts with RNA polymerase to initiate transcription from early gene promoters. Is recruited by the RPO-associated protein of 94 kDa (RAP94) to form the early transcription complex, which also contains the core RNA polymerase. ETF heterodimer binds to early gene promoters (By similarity).</text>
</comment>
<comment type="subunit">
    <text evidence="1">Heterodimer of a 70 kDa and a 82 kDa subunit. Part of the early transcription complex composed of ETF, RAP94, and the DNA-directed RNA polymerase (By similarity).</text>
</comment>
<comment type="subcellular location">
    <subcellularLocation>
        <location evidence="3">Virion</location>
    </subcellularLocation>
    <text>All the enzymes and other proteins required to synthesize early mRNAs are packaged within the virion core along with the DNA genome. This is necessary because viral early mRNAs are synthesized within minutes after virus entry into the cell and are extruded through pores in the core particle.</text>
</comment>
<comment type="similarity">
    <text evidence="3">Belongs to the helicase family. VETF subfamily.</text>
</comment>
<evidence type="ECO:0000250" key="1"/>
<evidence type="ECO:0000255" key="2">
    <source>
        <dbReference type="PROSITE-ProRule" id="PRU00541"/>
    </source>
</evidence>
<evidence type="ECO:0000305" key="3"/>